<organism>
    <name type="scientific">Synechococcus sp. (strain RCC307)</name>
    <dbReference type="NCBI Taxonomy" id="316278"/>
    <lineage>
        <taxon>Bacteria</taxon>
        <taxon>Bacillati</taxon>
        <taxon>Cyanobacteriota</taxon>
        <taxon>Cyanophyceae</taxon>
        <taxon>Synechococcales</taxon>
        <taxon>Synechococcaceae</taxon>
        <taxon>Synechococcus</taxon>
    </lineage>
</organism>
<protein>
    <recommendedName>
        <fullName evidence="2">Elongation factor Tu</fullName>
        <shortName evidence="2">EF-Tu</shortName>
        <ecNumber evidence="2">3.6.5.3</ecNumber>
    </recommendedName>
</protein>
<reference key="1">
    <citation type="submission" date="2006-05" db="EMBL/GenBank/DDBJ databases">
        <authorList>
            <consortium name="Genoscope"/>
        </authorList>
    </citation>
    <scope>NUCLEOTIDE SEQUENCE [LARGE SCALE GENOMIC DNA]</scope>
    <source>
        <strain>RCC307</strain>
    </source>
</reference>
<keyword id="KW-0963">Cytoplasm</keyword>
<keyword id="KW-0251">Elongation factor</keyword>
<keyword id="KW-0342">GTP-binding</keyword>
<keyword id="KW-0378">Hydrolase</keyword>
<keyword id="KW-0460">Magnesium</keyword>
<keyword id="KW-0479">Metal-binding</keyword>
<keyword id="KW-0547">Nucleotide-binding</keyword>
<keyword id="KW-0648">Protein biosynthesis</keyword>
<keyword id="KW-1185">Reference proteome</keyword>
<sequence>MAREKFERNKPHVNIGTIGHVDHGKTTLTAAITNVLAKKGQAQVQNYADIDGAPEERERGITINTAHVEYETDTRHYAHVDCPGHADYVKNMITGAAQMDGAILVCAATDGPMAQTKEHILLAKQVGVPALVVALNKCDMVDDEELIELVEMEIRELLSSYDFPGDDIPVVQVSGLKAIEGEAEWEAKIDELMAAVDANIPEPVREVDKPFLMAVEDVFSITGRGTVATGRIERGIVKVGEEIEIVGIKDTRKSTVTGVEMFRKLLDEGMAGDNVGLLLRGIQKEDIERGMVLVKPGSITPHTKFEGEVYVLKKEEGGRHTPFFAGYRPQFYIRTTDVTGQITAFTDRDGGNVEMVMPGDNIKMTGELICPVAIEQGMRFAIREGGRTIGAGVVTKIIE</sequence>
<proteinExistence type="inferred from homology"/>
<accession>A5GW14</accession>
<evidence type="ECO:0000250" key="1"/>
<evidence type="ECO:0000255" key="2">
    <source>
        <dbReference type="HAMAP-Rule" id="MF_00118"/>
    </source>
</evidence>
<comment type="function">
    <text evidence="2">GTP hydrolase that promotes the GTP-dependent binding of aminoacyl-tRNA to the A-site of ribosomes during protein biosynthesis.</text>
</comment>
<comment type="catalytic activity">
    <reaction evidence="2">
        <text>GTP + H2O = GDP + phosphate + H(+)</text>
        <dbReference type="Rhea" id="RHEA:19669"/>
        <dbReference type="ChEBI" id="CHEBI:15377"/>
        <dbReference type="ChEBI" id="CHEBI:15378"/>
        <dbReference type="ChEBI" id="CHEBI:37565"/>
        <dbReference type="ChEBI" id="CHEBI:43474"/>
        <dbReference type="ChEBI" id="CHEBI:58189"/>
        <dbReference type="EC" id="3.6.5.3"/>
    </reaction>
    <physiologicalReaction direction="left-to-right" evidence="2">
        <dbReference type="Rhea" id="RHEA:19670"/>
    </physiologicalReaction>
</comment>
<comment type="subunit">
    <text evidence="2">Monomer.</text>
</comment>
<comment type="subcellular location">
    <subcellularLocation>
        <location evidence="2">Cytoplasm</location>
    </subcellularLocation>
</comment>
<comment type="similarity">
    <text evidence="2">Belongs to the TRAFAC class translation factor GTPase superfamily. Classic translation factor GTPase family. EF-Tu/EF-1A subfamily.</text>
</comment>
<gene>
    <name evidence="2" type="primary">tuf</name>
    <name type="ordered locus">SynRCC307_2170</name>
</gene>
<name>EFTU_SYNR3</name>
<feature type="chain" id="PRO_1000015772" description="Elongation factor Tu">
    <location>
        <begin position="1"/>
        <end position="399"/>
    </location>
</feature>
<feature type="domain" description="tr-type G">
    <location>
        <begin position="10"/>
        <end position="204"/>
    </location>
</feature>
<feature type="region of interest" description="G1" evidence="1">
    <location>
        <begin position="19"/>
        <end position="26"/>
    </location>
</feature>
<feature type="region of interest" description="G2" evidence="1">
    <location>
        <begin position="60"/>
        <end position="64"/>
    </location>
</feature>
<feature type="region of interest" description="G3" evidence="1">
    <location>
        <begin position="81"/>
        <end position="84"/>
    </location>
</feature>
<feature type="region of interest" description="G4" evidence="1">
    <location>
        <begin position="136"/>
        <end position="139"/>
    </location>
</feature>
<feature type="region of interest" description="G5" evidence="1">
    <location>
        <begin position="174"/>
        <end position="176"/>
    </location>
</feature>
<feature type="binding site" evidence="2">
    <location>
        <begin position="19"/>
        <end position="26"/>
    </location>
    <ligand>
        <name>GTP</name>
        <dbReference type="ChEBI" id="CHEBI:37565"/>
    </ligand>
</feature>
<feature type="binding site" evidence="2">
    <location>
        <position position="26"/>
    </location>
    <ligand>
        <name>Mg(2+)</name>
        <dbReference type="ChEBI" id="CHEBI:18420"/>
    </ligand>
</feature>
<feature type="binding site" evidence="2">
    <location>
        <begin position="81"/>
        <end position="85"/>
    </location>
    <ligand>
        <name>GTP</name>
        <dbReference type="ChEBI" id="CHEBI:37565"/>
    </ligand>
</feature>
<feature type="binding site" evidence="2">
    <location>
        <begin position="136"/>
        <end position="139"/>
    </location>
    <ligand>
        <name>GTP</name>
        <dbReference type="ChEBI" id="CHEBI:37565"/>
    </ligand>
</feature>
<dbReference type="EC" id="3.6.5.3" evidence="2"/>
<dbReference type="EMBL" id="CT978603">
    <property type="protein sequence ID" value="CAK29073.1"/>
    <property type="molecule type" value="Genomic_DNA"/>
</dbReference>
<dbReference type="SMR" id="A5GW14"/>
<dbReference type="STRING" id="316278.SynRCC307_2170"/>
<dbReference type="KEGG" id="syr:SynRCC307_2170"/>
<dbReference type="eggNOG" id="COG0050">
    <property type="taxonomic scope" value="Bacteria"/>
</dbReference>
<dbReference type="HOGENOM" id="CLU_007265_0_1_3"/>
<dbReference type="OrthoDB" id="9804504at2"/>
<dbReference type="Proteomes" id="UP000001115">
    <property type="component" value="Chromosome"/>
</dbReference>
<dbReference type="GO" id="GO:0005829">
    <property type="term" value="C:cytosol"/>
    <property type="evidence" value="ECO:0007669"/>
    <property type="project" value="TreeGrafter"/>
</dbReference>
<dbReference type="GO" id="GO:0005525">
    <property type="term" value="F:GTP binding"/>
    <property type="evidence" value="ECO:0007669"/>
    <property type="project" value="UniProtKB-UniRule"/>
</dbReference>
<dbReference type="GO" id="GO:0003924">
    <property type="term" value="F:GTPase activity"/>
    <property type="evidence" value="ECO:0007669"/>
    <property type="project" value="InterPro"/>
</dbReference>
<dbReference type="GO" id="GO:0003746">
    <property type="term" value="F:translation elongation factor activity"/>
    <property type="evidence" value="ECO:0007669"/>
    <property type="project" value="UniProtKB-UniRule"/>
</dbReference>
<dbReference type="CDD" id="cd01884">
    <property type="entry name" value="EF_Tu"/>
    <property type="match status" value="1"/>
</dbReference>
<dbReference type="CDD" id="cd03697">
    <property type="entry name" value="EFTU_II"/>
    <property type="match status" value="1"/>
</dbReference>
<dbReference type="CDD" id="cd03707">
    <property type="entry name" value="EFTU_III"/>
    <property type="match status" value="1"/>
</dbReference>
<dbReference type="FunFam" id="2.40.30.10:FF:000001">
    <property type="entry name" value="Elongation factor Tu"/>
    <property type="match status" value="1"/>
</dbReference>
<dbReference type="FunFam" id="3.40.50.300:FF:000003">
    <property type="entry name" value="Elongation factor Tu"/>
    <property type="match status" value="1"/>
</dbReference>
<dbReference type="Gene3D" id="3.40.50.300">
    <property type="entry name" value="P-loop containing nucleotide triphosphate hydrolases"/>
    <property type="match status" value="1"/>
</dbReference>
<dbReference type="Gene3D" id="2.40.30.10">
    <property type="entry name" value="Translation factors"/>
    <property type="match status" value="2"/>
</dbReference>
<dbReference type="HAMAP" id="MF_00118_B">
    <property type="entry name" value="EF_Tu_B"/>
    <property type="match status" value="1"/>
</dbReference>
<dbReference type="InterPro" id="IPR041709">
    <property type="entry name" value="EF-Tu_GTP-bd"/>
</dbReference>
<dbReference type="InterPro" id="IPR050055">
    <property type="entry name" value="EF-Tu_GTPase"/>
</dbReference>
<dbReference type="InterPro" id="IPR004161">
    <property type="entry name" value="EFTu-like_2"/>
</dbReference>
<dbReference type="InterPro" id="IPR033720">
    <property type="entry name" value="EFTU_2"/>
</dbReference>
<dbReference type="InterPro" id="IPR031157">
    <property type="entry name" value="G_TR_CS"/>
</dbReference>
<dbReference type="InterPro" id="IPR027417">
    <property type="entry name" value="P-loop_NTPase"/>
</dbReference>
<dbReference type="InterPro" id="IPR005225">
    <property type="entry name" value="Small_GTP-bd"/>
</dbReference>
<dbReference type="InterPro" id="IPR000795">
    <property type="entry name" value="T_Tr_GTP-bd_dom"/>
</dbReference>
<dbReference type="InterPro" id="IPR009000">
    <property type="entry name" value="Transl_B-barrel_sf"/>
</dbReference>
<dbReference type="InterPro" id="IPR009001">
    <property type="entry name" value="Transl_elong_EF1A/Init_IF2_C"/>
</dbReference>
<dbReference type="InterPro" id="IPR004541">
    <property type="entry name" value="Transl_elong_EFTu/EF1A_bac/org"/>
</dbReference>
<dbReference type="InterPro" id="IPR004160">
    <property type="entry name" value="Transl_elong_EFTu/EF1A_C"/>
</dbReference>
<dbReference type="NCBIfam" id="TIGR00485">
    <property type="entry name" value="EF-Tu"/>
    <property type="match status" value="1"/>
</dbReference>
<dbReference type="NCBIfam" id="NF000766">
    <property type="entry name" value="PRK00049.1"/>
    <property type="match status" value="1"/>
</dbReference>
<dbReference type="NCBIfam" id="NF009372">
    <property type="entry name" value="PRK12735.1"/>
    <property type="match status" value="1"/>
</dbReference>
<dbReference type="NCBIfam" id="NF009373">
    <property type="entry name" value="PRK12736.1"/>
    <property type="match status" value="1"/>
</dbReference>
<dbReference type="NCBIfam" id="TIGR00231">
    <property type="entry name" value="small_GTP"/>
    <property type="match status" value="1"/>
</dbReference>
<dbReference type="PANTHER" id="PTHR43721:SF22">
    <property type="entry name" value="ELONGATION FACTOR TU, MITOCHONDRIAL"/>
    <property type="match status" value="1"/>
</dbReference>
<dbReference type="PANTHER" id="PTHR43721">
    <property type="entry name" value="ELONGATION FACTOR TU-RELATED"/>
    <property type="match status" value="1"/>
</dbReference>
<dbReference type="Pfam" id="PF00009">
    <property type="entry name" value="GTP_EFTU"/>
    <property type="match status" value="1"/>
</dbReference>
<dbReference type="Pfam" id="PF03144">
    <property type="entry name" value="GTP_EFTU_D2"/>
    <property type="match status" value="1"/>
</dbReference>
<dbReference type="Pfam" id="PF03143">
    <property type="entry name" value="GTP_EFTU_D3"/>
    <property type="match status" value="1"/>
</dbReference>
<dbReference type="PRINTS" id="PR00315">
    <property type="entry name" value="ELONGATNFCT"/>
</dbReference>
<dbReference type="SUPFAM" id="SSF50465">
    <property type="entry name" value="EF-Tu/eEF-1alpha/eIF2-gamma C-terminal domain"/>
    <property type="match status" value="1"/>
</dbReference>
<dbReference type="SUPFAM" id="SSF52540">
    <property type="entry name" value="P-loop containing nucleoside triphosphate hydrolases"/>
    <property type="match status" value="1"/>
</dbReference>
<dbReference type="SUPFAM" id="SSF50447">
    <property type="entry name" value="Translation proteins"/>
    <property type="match status" value="1"/>
</dbReference>
<dbReference type="PROSITE" id="PS00301">
    <property type="entry name" value="G_TR_1"/>
    <property type="match status" value="1"/>
</dbReference>
<dbReference type="PROSITE" id="PS51722">
    <property type="entry name" value="G_TR_2"/>
    <property type="match status" value="1"/>
</dbReference>